<protein>
    <recommendedName>
        <fullName>Guanine nucleotide-binding protein subunit beta-like protein</fullName>
    </recommendedName>
</protein>
<keyword id="KW-1185">Reference proteome</keyword>
<keyword id="KW-0677">Repeat</keyword>
<keyword id="KW-0853">WD repeat</keyword>
<evidence type="ECO:0000269" key="1">
    <source>
    </source>
</evidence>
<evidence type="ECO:0000305" key="2"/>
<gene>
    <name type="ordered locus">ECU08_1110</name>
</gene>
<accession>Q8SRB0</accession>
<dbReference type="EMBL" id="AL590448">
    <property type="protein sequence ID" value="CAD26417.1"/>
    <property type="molecule type" value="Genomic_DNA"/>
</dbReference>
<dbReference type="RefSeq" id="NP_597241.1">
    <property type="nucleotide sequence ID" value="NM_001041850.1"/>
</dbReference>
<dbReference type="SMR" id="Q8SRB0"/>
<dbReference type="FunCoup" id="Q8SRB0">
    <property type="interactions" value="40"/>
</dbReference>
<dbReference type="STRING" id="284813.Q8SRB0"/>
<dbReference type="GeneID" id="859663"/>
<dbReference type="KEGG" id="ecu:ECU08_1110"/>
<dbReference type="VEuPathDB" id="MicrosporidiaDB:ECU08_1110"/>
<dbReference type="HOGENOM" id="CLU_831632_0_0_1"/>
<dbReference type="InParanoid" id="Q8SRB0"/>
<dbReference type="OMA" id="DGHKEWI"/>
<dbReference type="OrthoDB" id="7875889at2759"/>
<dbReference type="Proteomes" id="UP000000819">
    <property type="component" value="Chromosome VIII"/>
</dbReference>
<dbReference type="CDD" id="cd00200">
    <property type="entry name" value="WD40"/>
    <property type="match status" value="1"/>
</dbReference>
<dbReference type="Gene3D" id="2.130.10.10">
    <property type="entry name" value="YVTN repeat-like/Quinoprotein amine dehydrogenase"/>
    <property type="match status" value="2"/>
</dbReference>
<dbReference type="InterPro" id="IPR020472">
    <property type="entry name" value="G-protein_beta_WD-40_rep"/>
</dbReference>
<dbReference type="InterPro" id="IPR015943">
    <property type="entry name" value="WD40/YVTN_repeat-like_dom_sf"/>
</dbReference>
<dbReference type="InterPro" id="IPR019775">
    <property type="entry name" value="WD40_repeat_CS"/>
</dbReference>
<dbReference type="InterPro" id="IPR036322">
    <property type="entry name" value="WD40_repeat_dom_sf"/>
</dbReference>
<dbReference type="InterPro" id="IPR001680">
    <property type="entry name" value="WD40_rpt"/>
</dbReference>
<dbReference type="PANTHER" id="PTHR19848:SF8">
    <property type="entry name" value="F-BOX AND WD REPEAT DOMAIN CONTAINING 7"/>
    <property type="match status" value="1"/>
</dbReference>
<dbReference type="PANTHER" id="PTHR19848">
    <property type="entry name" value="WD40 REPEAT PROTEIN"/>
    <property type="match status" value="1"/>
</dbReference>
<dbReference type="Pfam" id="PF00400">
    <property type="entry name" value="WD40"/>
    <property type="match status" value="3"/>
</dbReference>
<dbReference type="PRINTS" id="PR00320">
    <property type="entry name" value="GPROTEINBRPT"/>
</dbReference>
<dbReference type="SMART" id="SM00320">
    <property type="entry name" value="WD40"/>
    <property type="match status" value="6"/>
</dbReference>
<dbReference type="SUPFAM" id="SSF50978">
    <property type="entry name" value="WD40 repeat-like"/>
    <property type="match status" value="1"/>
</dbReference>
<dbReference type="PROSITE" id="PS00678">
    <property type="entry name" value="WD_REPEATS_1"/>
    <property type="match status" value="3"/>
</dbReference>
<dbReference type="PROSITE" id="PS50082">
    <property type="entry name" value="WD_REPEATS_2"/>
    <property type="match status" value="3"/>
</dbReference>
<dbReference type="PROSITE" id="PS50294">
    <property type="entry name" value="WD_REPEATS_REGION"/>
    <property type="match status" value="1"/>
</dbReference>
<organism>
    <name type="scientific">Encephalitozoon cuniculi (strain GB-M1)</name>
    <name type="common">Microsporidian parasite</name>
    <dbReference type="NCBI Taxonomy" id="284813"/>
    <lineage>
        <taxon>Eukaryota</taxon>
        <taxon>Fungi</taxon>
        <taxon>Fungi incertae sedis</taxon>
        <taxon>Microsporidia</taxon>
        <taxon>Unikaryonidae</taxon>
        <taxon>Encephalitozoon</taxon>
    </lineage>
</organism>
<feature type="chain" id="PRO_0000383332" description="Guanine nucleotide-binding protein subunit beta-like protein">
    <location>
        <begin position="1"/>
        <end position="334"/>
    </location>
</feature>
<feature type="repeat" description="WD 1">
    <location>
        <begin position="14"/>
        <end position="55"/>
    </location>
</feature>
<feature type="repeat" description="WD 2">
    <location>
        <begin position="65"/>
        <end position="104"/>
    </location>
</feature>
<feature type="repeat" description="WD 3">
    <location>
        <begin position="106"/>
        <end position="145"/>
    </location>
</feature>
<feature type="repeat" description="WD 4">
    <location>
        <begin position="152"/>
        <end position="192"/>
    </location>
</feature>
<feature type="repeat" description="WD 5">
    <location>
        <begin position="215"/>
        <end position="256"/>
    </location>
</feature>
<feature type="repeat" description="WD 6">
    <location>
        <begin position="257"/>
        <end position="294"/>
    </location>
</feature>
<reference key="1">
    <citation type="journal article" date="2001" name="Nature">
        <title>Genome sequence and gene compaction of the eukaryote parasite Encephalitozoon cuniculi.</title>
        <authorList>
            <person name="Katinka M.D."/>
            <person name="Duprat S."/>
            <person name="Cornillot E."/>
            <person name="Metenier G."/>
            <person name="Thomarat F."/>
            <person name="Prensier G."/>
            <person name="Barbe V."/>
            <person name="Peyretaillade E."/>
            <person name="Brottier P."/>
            <person name="Wincker P."/>
            <person name="Delbac F."/>
            <person name="El Alaoui H."/>
            <person name="Peyret P."/>
            <person name="Saurin W."/>
            <person name="Gouy M."/>
            <person name="Weissenbach J."/>
            <person name="Vivares C.P."/>
        </authorList>
    </citation>
    <scope>NUCLEOTIDE SEQUENCE [LARGE SCALE GENOMIC DNA]</scope>
    <source>
        <strain>GB-M1</strain>
    </source>
</reference>
<reference key="2">
    <citation type="journal article" date="2006" name="Proteomics">
        <title>Proteomic analysis of the eukaryotic parasite Encephalitozoon cuniculi (microsporidia): a reference map for proteins expressed in late sporogonial stages.</title>
        <authorList>
            <person name="Brosson D."/>
            <person name="Kuhn L."/>
            <person name="Delbac F."/>
            <person name="Garin J."/>
            <person name="Vivares C.P."/>
            <person name="Texier C."/>
        </authorList>
    </citation>
    <scope>IDENTIFICATION BY MASS SPECTROMETRY [LARGE SCALE ANALYSIS]</scope>
    <scope>DEVELOPMENTAL STAGE</scope>
    <scope>SUBCELLULAR LOCATION</scope>
</reference>
<comment type="developmental stage">
    <text evidence="1">Expressed in late sporogonial stages.</text>
</comment>
<comment type="similarity">
    <text evidence="2">Belongs to the WD repeat G protein beta family.</text>
</comment>
<proteinExistence type="evidence at protein level"/>
<name>GBLP_ENCCU</name>
<sequence length="334" mass="36751">MSSAELEVLEYLNGHKDEVKGLKIVRVSGREILYSSSRDKKVFSWDLHSKIDSEFGKILKLYDGGHSKRINGLDVSKDGNMMVTVGSDGIGRIWDTESKKSILLEGHGRDVLCVSINSNDTKIVTGSVDRTMNLYNTKGDLVLKMGRDMEMMHRGWINCVTFHPTEESILASGSADGTVKIWDLDTQEHLQTYLGGAYVDYEKAKEKKTSPVDYDESKSVTAMAFSKDGSILTYGEKSGKMYLVKVDSKECIQSFDAIVPVRSIAVGETEPVIALGTDESVIIWETISSRVIASYNLKEIGNGVRCLSLAFSGSTLYCGLSTGAIVPLELRKSD</sequence>